<proteinExistence type="inferred from homology"/>
<feature type="initiator methionine" description="Removed" evidence="1">
    <location>
        <position position="1"/>
    </location>
</feature>
<feature type="chain" id="PRO_0000389274" description="Small ribosomal subunit protein uS2">
    <location>
        <begin position="2"/>
        <end position="263"/>
    </location>
</feature>
<feature type="region of interest" description="Disordered" evidence="2">
    <location>
        <begin position="213"/>
        <end position="245"/>
    </location>
</feature>
<feature type="compositionally biased region" description="Low complexity" evidence="2">
    <location>
        <begin position="213"/>
        <end position="223"/>
    </location>
</feature>
<feature type="compositionally biased region" description="Acidic residues" evidence="2">
    <location>
        <begin position="224"/>
        <end position="245"/>
    </location>
</feature>
<feature type="modified residue" description="N-acetylserine" evidence="1">
    <location>
        <position position="2"/>
    </location>
</feature>
<comment type="function">
    <text evidence="1">Required for the assembly and/or stability of the 40S ribosomal subunit. Required for the processing of the 20S rRNA-precursor to mature 18S rRNA in a late step of the maturation of 40S ribosomal subunits.</text>
</comment>
<comment type="subunit">
    <text evidence="1">Component of the small ribosomal subunit. Mature ribosomes consist of a small (40S) and a large (60S) subunit. The 40S subunit contains about 33 different proteins and 1 molecule of RNA (18S). The 60S subunit contains about 49 different proteins and 3 molecules of RNA (25S, 5.8S and 5S). Interacts with RPS21.</text>
</comment>
<comment type="subcellular location">
    <subcellularLocation>
        <location evidence="1">Cytoplasm</location>
    </subcellularLocation>
</comment>
<comment type="similarity">
    <text evidence="1">Belongs to the universal ribosomal protein uS2 family.</text>
</comment>
<sequence>MSLPESFALTAEDAKLLLAANVHLGSKNVQVHNEPYVYKTRPDGVNVINIAKTWEKIVLAARIIAAIPNASDVVVCSSRTFGQRAVLKFASHTGATPIAGRFTPGNFTNYITRSFKEPRLVIVTDPRTDAQAIKESSYVNIPVIALSDVDSPSEYVDVAIPCNNKGKHSIGLIWWLLAREVLRLRGIIPDREAEWSVMPDLYFYRDPEEIEQNAAEEARAGATEETEEVVAEAETEWNTETNVEDWADSGVTAAGEEAAASQW</sequence>
<protein>
    <recommendedName>
        <fullName evidence="1">Small ribosomal subunit protein uS2</fullName>
    </recommendedName>
    <alternativeName>
        <fullName evidence="3">40S ribosomal protein S0</fullName>
    </alternativeName>
</protein>
<reference key="1">
    <citation type="journal article" date="2009" name="Nature">
        <title>Evolution of pathogenicity and sexual reproduction in eight Candida genomes.</title>
        <authorList>
            <person name="Butler G."/>
            <person name="Rasmussen M.D."/>
            <person name="Lin M.F."/>
            <person name="Santos M.A.S."/>
            <person name="Sakthikumar S."/>
            <person name="Munro C.A."/>
            <person name="Rheinbay E."/>
            <person name="Grabherr M."/>
            <person name="Forche A."/>
            <person name="Reedy J.L."/>
            <person name="Agrafioti I."/>
            <person name="Arnaud M.B."/>
            <person name="Bates S."/>
            <person name="Brown A.J.P."/>
            <person name="Brunke S."/>
            <person name="Costanzo M.C."/>
            <person name="Fitzpatrick D.A."/>
            <person name="de Groot P.W.J."/>
            <person name="Harris D."/>
            <person name="Hoyer L.L."/>
            <person name="Hube B."/>
            <person name="Klis F.M."/>
            <person name="Kodira C."/>
            <person name="Lennard N."/>
            <person name="Logue M.E."/>
            <person name="Martin R."/>
            <person name="Neiman A.M."/>
            <person name="Nikolaou E."/>
            <person name="Quail M.A."/>
            <person name="Quinn J."/>
            <person name="Santos M.C."/>
            <person name="Schmitzberger F.F."/>
            <person name="Sherlock G."/>
            <person name="Shah P."/>
            <person name="Silverstein K.A.T."/>
            <person name="Skrzypek M.S."/>
            <person name="Soll D."/>
            <person name="Staggs R."/>
            <person name="Stansfield I."/>
            <person name="Stumpf M.P.H."/>
            <person name="Sudbery P.E."/>
            <person name="Srikantha T."/>
            <person name="Zeng Q."/>
            <person name="Berman J."/>
            <person name="Berriman M."/>
            <person name="Heitman J."/>
            <person name="Gow N.A.R."/>
            <person name="Lorenz M.C."/>
            <person name="Birren B.W."/>
            <person name="Kellis M."/>
            <person name="Cuomo C.A."/>
        </authorList>
    </citation>
    <scope>NUCLEOTIDE SEQUENCE [LARGE SCALE GENOMIC DNA]</scope>
    <source>
        <strain>ATCC 42720</strain>
    </source>
</reference>
<organism>
    <name type="scientific">Clavispora lusitaniae (strain ATCC 42720)</name>
    <name type="common">Yeast</name>
    <name type="synonym">Candida lusitaniae</name>
    <dbReference type="NCBI Taxonomy" id="306902"/>
    <lineage>
        <taxon>Eukaryota</taxon>
        <taxon>Fungi</taxon>
        <taxon>Dikarya</taxon>
        <taxon>Ascomycota</taxon>
        <taxon>Saccharomycotina</taxon>
        <taxon>Pichiomycetes</taxon>
        <taxon>Metschnikowiaceae</taxon>
        <taxon>Clavispora</taxon>
    </lineage>
</organism>
<evidence type="ECO:0000255" key="1">
    <source>
        <dbReference type="HAMAP-Rule" id="MF_03015"/>
    </source>
</evidence>
<evidence type="ECO:0000256" key="2">
    <source>
        <dbReference type="SAM" id="MobiDB-lite"/>
    </source>
</evidence>
<evidence type="ECO:0000305" key="3"/>
<accession>C4Y2C6</accession>
<gene>
    <name evidence="1" type="primary">RPS0</name>
    <name type="ORF">CLUG_02689</name>
</gene>
<keyword id="KW-0007">Acetylation</keyword>
<keyword id="KW-0963">Cytoplasm</keyword>
<keyword id="KW-1185">Reference proteome</keyword>
<keyword id="KW-0687">Ribonucleoprotein</keyword>
<keyword id="KW-0689">Ribosomal protein</keyword>
<name>RSSA_CLAL4</name>
<dbReference type="EMBL" id="CH408078">
    <property type="protein sequence ID" value="EEQ38563.1"/>
    <property type="molecule type" value="Genomic_DNA"/>
</dbReference>
<dbReference type="RefSeq" id="XP_002617245.1">
    <property type="nucleotide sequence ID" value="XM_002617199.1"/>
</dbReference>
<dbReference type="SMR" id="C4Y2C6"/>
<dbReference type="FunCoup" id="C4Y2C6">
    <property type="interactions" value="1282"/>
</dbReference>
<dbReference type="STRING" id="306902.C4Y2C6"/>
<dbReference type="GeneID" id="8498007"/>
<dbReference type="KEGG" id="clu:CLUG_02689"/>
<dbReference type="VEuPathDB" id="FungiDB:CLUG_02689"/>
<dbReference type="HOGENOM" id="CLU_058171_2_0_1"/>
<dbReference type="InParanoid" id="C4Y2C6"/>
<dbReference type="OMA" id="VKNFFEP"/>
<dbReference type="OrthoDB" id="117147at4891"/>
<dbReference type="Proteomes" id="UP000007703">
    <property type="component" value="Unassembled WGS sequence"/>
</dbReference>
<dbReference type="GO" id="GO:0022627">
    <property type="term" value="C:cytosolic small ribosomal subunit"/>
    <property type="evidence" value="ECO:0007669"/>
    <property type="project" value="UniProtKB-UniRule"/>
</dbReference>
<dbReference type="GO" id="GO:0003735">
    <property type="term" value="F:structural constituent of ribosome"/>
    <property type="evidence" value="ECO:0007669"/>
    <property type="project" value="UniProtKB-UniRule"/>
</dbReference>
<dbReference type="GO" id="GO:0000028">
    <property type="term" value="P:ribosomal small subunit assembly"/>
    <property type="evidence" value="ECO:0007669"/>
    <property type="project" value="UniProtKB-UniRule"/>
</dbReference>
<dbReference type="GO" id="GO:0006412">
    <property type="term" value="P:translation"/>
    <property type="evidence" value="ECO:0007669"/>
    <property type="project" value="UniProtKB-UniRule"/>
</dbReference>
<dbReference type="CDD" id="cd01425">
    <property type="entry name" value="RPS2"/>
    <property type="match status" value="1"/>
</dbReference>
<dbReference type="FunFam" id="3.40.50.10490:FF:000010">
    <property type="entry name" value="40S ribosomal protein S0"/>
    <property type="match status" value="1"/>
</dbReference>
<dbReference type="Gene3D" id="3.40.50.10490">
    <property type="entry name" value="Glucose-6-phosphate isomerase like protein, domain 1"/>
    <property type="match status" value="1"/>
</dbReference>
<dbReference type="HAMAP" id="MF_03015">
    <property type="entry name" value="Ribosomal_S2_euk"/>
    <property type="match status" value="1"/>
</dbReference>
<dbReference type="InterPro" id="IPR001865">
    <property type="entry name" value="Ribosomal_uS2"/>
</dbReference>
<dbReference type="InterPro" id="IPR032281">
    <property type="entry name" value="Ribosomal_uS2_C"/>
</dbReference>
<dbReference type="InterPro" id="IPR018130">
    <property type="entry name" value="Ribosomal_uS2_CS"/>
</dbReference>
<dbReference type="InterPro" id="IPR027498">
    <property type="entry name" value="Ribosomal_uS2_euk"/>
</dbReference>
<dbReference type="InterPro" id="IPR005707">
    <property type="entry name" value="Ribosomal_uS2_euk/arc"/>
</dbReference>
<dbReference type="InterPro" id="IPR023591">
    <property type="entry name" value="Ribosomal_uS2_flav_dom_sf"/>
</dbReference>
<dbReference type="NCBIfam" id="TIGR01012">
    <property type="entry name" value="uS2_euk_arch"/>
    <property type="match status" value="1"/>
</dbReference>
<dbReference type="PANTHER" id="PTHR11489">
    <property type="entry name" value="40S RIBOSOMAL PROTEIN SA"/>
    <property type="match status" value="1"/>
</dbReference>
<dbReference type="Pfam" id="PF16122">
    <property type="entry name" value="40S_SA_C"/>
    <property type="match status" value="1"/>
</dbReference>
<dbReference type="Pfam" id="PF00318">
    <property type="entry name" value="Ribosomal_S2"/>
    <property type="match status" value="2"/>
</dbReference>
<dbReference type="PRINTS" id="PR00395">
    <property type="entry name" value="RIBOSOMALS2"/>
</dbReference>
<dbReference type="SUPFAM" id="SSF52313">
    <property type="entry name" value="Ribosomal protein S2"/>
    <property type="match status" value="1"/>
</dbReference>
<dbReference type="PROSITE" id="PS00962">
    <property type="entry name" value="RIBOSOMAL_S2_1"/>
    <property type="match status" value="1"/>
</dbReference>
<dbReference type="PROSITE" id="PS00963">
    <property type="entry name" value="RIBOSOMAL_S2_2"/>
    <property type="match status" value="1"/>
</dbReference>